<keyword id="KW-0150">Chloroplast</keyword>
<keyword id="KW-0472">Membrane</keyword>
<keyword id="KW-0934">Plastid</keyword>
<keyword id="KW-0691">RNA editing</keyword>
<keyword id="KW-0764">Sulfate transport</keyword>
<keyword id="KW-0812">Transmembrane</keyword>
<keyword id="KW-1133">Transmembrane helix</keyword>
<keyword id="KW-0813">Transport</keyword>
<accession>Q85AI0</accession>
<sequence>MSQLIFIPLLISLLVTKGKIRFLNNFESVLALSLHYGILVLALPIFILLYKAKKQPCSILLKVTTEPIILSAYATTFSTAFLAITINALFGLIIAWILVKYEFTGKETLDAIVDLPFALPASVGGLTLMTVYSDRGWMGPICSGLGLKIVFSRLGVPMATIFVSLPFVVRTIQPVLQDVEEELEEAAWCIGASPWTTFCQISLPLLTPSLLTGTALGFSRAIGEYGSIVLIACNIPMKDLVISVLIFQKLEQYDYQGAIVVATIVLIASFGGLLIINKVQLWKQNLSK</sequence>
<proteinExistence type="evidence at transcript level"/>
<name>CYST_ANTAG</name>
<dbReference type="EMBL" id="AB086179">
    <property type="protein sequence ID" value="BAC55399.1"/>
    <property type="molecule type" value="Genomic_DNA"/>
</dbReference>
<dbReference type="EMBL" id="AB087483">
    <property type="protein sequence ID" value="BAC55499.1"/>
    <property type="molecule type" value="mRNA"/>
</dbReference>
<dbReference type="RefSeq" id="NP_777462.1">
    <property type="nucleotide sequence ID" value="NC_004543.1"/>
</dbReference>
<dbReference type="SMR" id="Q85AI0"/>
<dbReference type="GeneID" id="2553507"/>
<dbReference type="GO" id="GO:0031969">
    <property type="term" value="C:chloroplast membrane"/>
    <property type="evidence" value="ECO:0007669"/>
    <property type="project" value="UniProtKB-SubCell"/>
</dbReference>
<dbReference type="GO" id="GO:0005886">
    <property type="term" value="C:plasma membrane"/>
    <property type="evidence" value="ECO:0007669"/>
    <property type="project" value="InterPro"/>
</dbReference>
<dbReference type="GO" id="GO:0015419">
    <property type="term" value="F:ABC-type sulfate transporter activity"/>
    <property type="evidence" value="ECO:0007669"/>
    <property type="project" value="InterPro"/>
</dbReference>
<dbReference type="CDD" id="cd06261">
    <property type="entry name" value="TM_PBP2"/>
    <property type="match status" value="1"/>
</dbReference>
<dbReference type="FunFam" id="1.10.3720.10:FF:000004">
    <property type="entry name" value="Sulfate transport system permease protein CysT"/>
    <property type="match status" value="1"/>
</dbReference>
<dbReference type="Gene3D" id="1.10.3720.10">
    <property type="entry name" value="MetI-like"/>
    <property type="match status" value="1"/>
</dbReference>
<dbReference type="InterPro" id="IPR011865">
    <property type="entry name" value="CysT_permease"/>
</dbReference>
<dbReference type="InterPro" id="IPR000515">
    <property type="entry name" value="MetI-like"/>
</dbReference>
<dbReference type="InterPro" id="IPR035906">
    <property type="entry name" value="MetI-like_sf"/>
</dbReference>
<dbReference type="InterPro" id="IPR005667">
    <property type="entry name" value="Sulph_transpt2"/>
</dbReference>
<dbReference type="NCBIfam" id="TIGR00969">
    <property type="entry name" value="3a0106s02"/>
    <property type="match status" value="1"/>
</dbReference>
<dbReference type="NCBIfam" id="TIGR02139">
    <property type="entry name" value="permease_CysT"/>
    <property type="match status" value="1"/>
</dbReference>
<dbReference type="PANTHER" id="PTHR30406">
    <property type="entry name" value="SULFATE TRANSPORT SYSTEM PERMEASE PROTEIN"/>
    <property type="match status" value="1"/>
</dbReference>
<dbReference type="PANTHER" id="PTHR30406:SF8">
    <property type="entry name" value="SULFATE TRANSPORT SYSTEM PERMEASE PROTEIN CYST"/>
    <property type="match status" value="1"/>
</dbReference>
<dbReference type="Pfam" id="PF00528">
    <property type="entry name" value="BPD_transp_1"/>
    <property type="match status" value="1"/>
</dbReference>
<dbReference type="SUPFAM" id="SSF161098">
    <property type="entry name" value="MetI-like"/>
    <property type="match status" value="1"/>
</dbReference>
<dbReference type="PROSITE" id="PS50928">
    <property type="entry name" value="ABC_TM1"/>
    <property type="match status" value="1"/>
</dbReference>
<gene>
    <name type="primary">cysT</name>
</gene>
<protein>
    <recommendedName>
        <fullName>Probable sulfate transport system permease protein cysT</fullName>
    </recommendedName>
</protein>
<organism>
    <name type="scientific">Anthoceros angustus</name>
    <name type="common">Hornwort</name>
    <name type="synonym">Anthoceros formosae</name>
    <dbReference type="NCBI Taxonomy" id="48387"/>
    <lineage>
        <taxon>Eukaryota</taxon>
        <taxon>Viridiplantae</taxon>
        <taxon>Streptophyta</taxon>
        <taxon>Embryophyta</taxon>
        <taxon>Anthocerotophyta</taxon>
        <taxon>Anthocerotopsida</taxon>
        <taxon>Anthocerotidae</taxon>
        <taxon>Anthocerotales</taxon>
        <taxon>Anthocerotaceae</taxon>
        <taxon>Anthoceros</taxon>
    </lineage>
</organism>
<feature type="chain" id="PRO_0000059993" description="Probable sulfate transport system permease protein cysT">
    <location>
        <begin position="1"/>
        <end position="288"/>
    </location>
</feature>
<feature type="transmembrane region" description="Helical" evidence="2">
    <location>
        <begin position="4"/>
        <end position="23"/>
    </location>
</feature>
<feature type="transmembrane region" description="Helical" evidence="2">
    <location>
        <begin position="29"/>
        <end position="49"/>
    </location>
</feature>
<feature type="transmembrane region" description="Helical" evidence="2">
    <location>
        <begin position="79"/>
        <end position="99"/>
    </location>
</feature>
<feature type="transmembrane region" description="Helical" evidence="2">
    <location>
        <begin position="111"/>
        <end position="131"/>
    </location>
</feature>
<feature type="transmembrane region" description="Helical" evidence="2">
    <location>
        <begin position="149"/>
        <end position="169"/>
    </location>
</feature>
<feature type="transmembrane region" description="Helical" evidence="2">
    <location>
        <begin position="227"/>
        <end position="247"/>
    </location>
</feature>
<feature type="transmembrane region" description="Helical" evidence="2">
    <location>
        <begin position="257"/>
        <end position="277"/>
    </location>
</feature>
<feature type="domain" description="ABC transmembrane type-1" evidence="2">
    <location>
        <begin position="73"/>
        <end position="276"/>
    </location>
</feature>
<reference key="1">
    <citation type="journal article" date="2003" name="Nucleic Acids Res.">
        <title>The complete nucleotide sequence of the hornwort (Anthoceros formosae) chloroplast genome: insight into the earliest land plants.</title>
        <authorList>
            <person name="Kugita M."/>
            <person name="Kaneko A."/>
            <person name="Yamamoto Y."/>
            <person name="Takeya Y."/>
            <person name="Matsumoto T."/>
            <person name="Yoshinaga K."/>
        </authorList>
    </citation>
    <scope>NUCLEOTIDE SEQUENCE [LARGE SCALE GENOMIC DNA]</scope>
    <scope>RNA EDITING</scope>
</reference>
<reference key="2">
    <citation type="journal article" date="2003" name="Nucleic Acids Res.">
        <title>RNA editing in hornwort chloroplasts makes more than half the genes functional.</title>
        <authorList>
            <person name="Kugita M."/>
            <person name="Yamamoto Y."/>
            <person name="Fujikawa T."/>
            <person name="Matsumoto T."/>
            <person name="Yoshinaga K."/>
        </authorList>
    </citation>
    <scope>NUCLEOTIDE SEQUENCE [MRNA]</scope>
    <scope>RNA EDITING</scope>
    <source>
        <tissue>Thallus</tissue>
    </source>
</reference>
<evidence type="ECO:0000250" key="1"/>
<evidence type="ECO:0000255" key="2">
    <source>
        <dbReference type="PROSITE-ProRule" id="PRU00441"/>
    </source>
</evidence>
<evidence type="ECO:0000269" key="3">
    <source>
    </source>
</evidence>
<evidence type="ECO:0000269" key="4">
    <source>
    </source>
</evidence>
<evidence type="ECO:0000305" key="5"/>
<comment type="function">
    <text evidence="1">Part of the ABC transporter complex cysAWTP (TC 3.A.1.6.1) involved in sulfate/thiosulfate import. Probably responsible for the translocation of the substrate across the membrane (By similarity).</text>
</comment>
<comment type="subcellular location">
    <subcellularLocation>
        <location evidence="5">Plastid</location>
        <location evidence="5">Chloroplast membrane</location>
        <topology evidence="5">Multi-pass membrane protein</topology>
    </subcellularLocation>
</comment>
<comment type="RNA editing">
    <location>
        <position position="9" evidence="3 4"/>
    </location>
    <location>
        <position position="21" evidence="3 4"/>
    </location>
    <location>
        <position position="48" evidence="3 4"/>
    </location>
    <location>
        <position position="71" evidence="3 4"/>
    </location>
    <location>
        <position position="82" evidence="3 4"/>
    </location>
    <location>
        <position position="86" evidence="3 4"/>
    </location>
    <location>
        <position position="103" evidence="3 4"/>
    </location>
    <location>
        <position position="116" evidence="3 4"/>
    </location>
    <location>
        <position position="128" evidence="3 4"/>
    </location>
    <location>
        <position position="176" evidence="3 4"/>
    </location>
    <location>
        <position position="230" evidence="3 4"/>
    </location>
    <location>
        <position position="245" evidence="3 4"/>
    </location>
    <location>
        <position position="274" evidence="3 4"/>
    </location>
    <location>
        <position position="280" evidence="3 4"/>
    </location>
    <text>The nonsense codons at positions 21 and 280 are modified to sense codons.</text>
</comment>
<comment type="similarity">
    <text evidence="5">Belongs to the binding-protein-dependent transport system permease family. CysTW subfamily.</text>
</comment>
<geneLocation type="chloroplast"/>